<reference key="1">
    <citation type="journal article" date="2013" name="Plant Physiol.">
        <title>A Nostoc punctiforme Sugar Transporter Necessary to Establish a Cyanobacterium-Plant Symbiosis.</title>
        <authorList>
            <person name="Ekman M."/>
            <person name="Picossi S."/>
            <person name="Campbell E.L."/>
            <person name="Meeks J.C."/>
            <person name="Flores E."/>
        </authorList>
    </citation>
    <scope>NUCLEOTIDE SEQUENCE [LARGE SCALE GENOMIC DNA]</scope>
    <source>
        <strain>ATCC 29133 / PCC 73102</strain>
    </source>
</reference>
<feature type="chain" id="PRO_1000126229" description="Probable 2-phosphosulfolactate phosphatase">
    <location>
        <begin position="1"/>
        <end position="246"/>
    </location>
</feature>
<accession>B2IVU1</accession>
<comment type="catalytic activity">
    <reaction evidence="1">
        <text>(2R)-O-phospho-3-sulfolactate + H2O = (2R)-3-sulfolactate + phosphate</text>
        <dbReference type="Rhea" id="RHEA:23416"/>
        <dbReference type="ChEBI" id="CHEBI:15377"/>
        <dbReference type="ChEBI" id="CHEBI:15597"/>
        <dbReference type="ChEBI" id="CHEBI:43474"/>
        <dbReference type="ChEBI" id="CHEBI:58738"/>
        <dbReference type="EC" id="3.1.3.71"/>
    </reaction>
</comment>
<comment type="cofactor">
    <cofactor evidence="1">
        <name>Mg(2+)</name>
        <dbReference type="ChEBI" id="CHEBI:18420"/>
    </cofactor>
</comment>
<comment type="similarity">
    <text evidence="1">Belongs to the ComB family.</text>
</comment>
<keyword id="KW-0378">Hydrolase</keyword>
<keyword id="KW-0460">Magnesium</keyword>
<keyword id="KW-1185">Reference proteome</keyword>
<name>COMB_NOSP7</name>
<proteinExistence type="inferred from homology"/>
<protein>
    <recommendedName>
        <fullName evidence="1">Probable 2-phosphosulfolactate phosphatase</fullName>
        <ecNumber evidence="1">3.1.3.71</ecNumber>
    </recommendedName>
</protein>
<gene>
    <name evidence="1" type="primary">comB</name>
    <name type="ordered locus">Npun_R4542</name>
</gene>
<organism>
    <name type="scientific">Nostoc punctiforme (strain ATCC 29133 / PCC 73102)</name>
    <dbReference type="NCBI Taxonomy" id="63737"/>
    <lineage>
        <taxon>Bacteria</taxon>
        <taxon>Bacillati</taxon>
        <taxon>Cyanobacteriota</taxon>
        <taxon>Cyanophyceae</taxon>
        <taxon>Nostocales</taxon>
        <taxon>Nostocaceae</taxon>
        <taxon>Nostoc</taxon>
    </lineage>
</organism>
<sequence length="246" mass="26962">MKLFLYHTPELTPTDKAPECAIAVDVLRATSTIATVLASGGEAVQVFSDLDRLIEVSEKWPHEKRLRAGERGGAKVAGFELGNSPLDCTPELVQGRRLFISTTNGTRALQRVQDSPNVLAAALINRAAVVQFLLDKQPETVWIVGSGWEGSFSLEDTVCAGAIAHSIWQQTQLSPEEIAGNDEVISAIALYSQWQDNLLGLLHQASHGQRLLRLDCHEDLKYCSQTDILDVLPIQHETGVLKSQKK</sequence>
<evidence type="ECO:0000255" key="1">
    <source>
        <dbReference type="HAMAP-Rule" id="MF_00490"/>
    </source>
</evidence>
<dbReference type="EC" id="3.1.3.71" evidence="1"/>
<dbReference type="EMBL" id="CP001037">
    <property type="protein sequence ID" value="ACC82904.1"/>
    <property type="molecule type" value="Genomic_DNA"/>
</dbReference>
<dbReference type="RefSeq" id="WP_012410865.1">
    <property type="nucleotide sequence ID" value="NC_010628.1"/>
</dbReference>
<dbReference type="SMR" id="B2IVU1"/>
<dbReference type="STRING" id="63737.Npun_R4542"/>
<dbReference type="EnsemblBacteria" id="ACC82904">
    <property type="protein sequence ID" value="ACC82904"/>
    <property type="gene ID" value="Npun_R4542"/>
</dbReference>
<dbReference type="KEGG" id="npu:Npun_R4542"/>
<dbReference type="eggNOG" id="COG2045">
    <property type="taxonomic scope" value="Bacteria"/>
</dbReference>
<dbReference type="HOGENOM" id="CLU_070028_0_1_3"/>
<dbReference type="OrthoDB" id="4913at2"/>
<dbReference type="PhylomeDB" id="B2IVU1"/>
<dbReference type="Proteomes" id="UP000001191">
    <property type="component" value="Chromosome"/>
</dbReference>
<dbReference type="GO" id="GO:0050532">
    <property type="term" value="F:2-phosphosulfolactate phosphatase activity"/>
    <property type="evidence" value="ECO:0007669"/>
    <property type="project" value="UniProtKB-UniRule"/>
</dbReference>
<dbReference type="GO" id="GO:0000287">
    <property type="term" value="F:magnesium ion binding"/>
    <property type="evidence" value="ECO:0007669"/>
    <property type="project" value="UniProtKB-UniRule"/>
</dbReference>
<dbReference type="GO" id="GO:0050545">
    <property type="term" value="F:sulfopyruvate decarboxylase activity"/>
    <property type="evidence" value="ECO:0007669"/>
    <property type="project" value="TreeGrafter"/>
</dbReference>
<dbReference type="FunFam" id="3.90.1560.10:FF:000001">
    <property type="entry name" value="Probable 2-phosphosulfolactate phosphatase"/>
    <property type="match status" value="1"/>
</dbReference>
<dbReference type="Gene3D" id="3.90.1560.10">
    <property type="entry name" value="ComB-like"/>
    <property type="match status" value="1"/>
</dbReference>
<dbReference type="HAMAP" id="MF_00490">
    <property type="entry name" value="ComB"/>
    <property type="match status" value="1"/>
</dbReference>
<dbReference type="InterPro" id="IPR005238">
    <property type="entry name" value="ComB-like"/>
</dbReference>
<dbReference type="InterPro" id="IPR036702">
    <property type="entry name" value="ComB-like_sf"/>
</dbReference>
<dbReference type="NCBIfam" id="NF002056">
    <property type="entry name" value="PRK00886.1-5"/>
    <property type="match status" value="1"/>
</dbReference>
<dbReference type="PANTHER" id="PTHR37311">
    <property type="entry name" value="2-PHOSPHOSULFOLACTATE PHOSPHATASE-RELATED"/>
    <property type="match status" value="1"/>
</dbReference>
<dbReference type="PANTHER" id="PTHR37311:SF1">
    <property type="entry name" value="2-PHOSPHOSULFOLACTATE PHOSPHATASE-RELATED"/>
    <property type="match status" value="1"/>
</dbReference>
<dbReference type="Pfam" id="PF04029">
    <property type="entry name" value="2-ph_phosp"/>
    <property type="match status" value="1"/>
</dbReference>
<dbReference type="SUPFAM" id="SSF142823">
    <property type="entry name" value="ComB-like"/>
    <property type="match status" value="1"/>
</dbReference>